<reference key="1">
    <citation type="submission" date="2006-04" db="EMBL/GenBank/DDBJ databases">
        <authorList>
            <consortium name="NIH - Mammalian Gene Collection (MGC) project"/>
        </authorList>
    </citation>
    <scope>NUCLEOTIDE SEQUENCE [LARGE SCALE MRNA]</scope>
    <source>
        <strain>Hereford</strain>
        <tissue>Uterus</tissue>
    </source>
</reference>
<sequence>MGKRDRADREKKKSKKRHYEDEEDEEDDAPGNDTQEAVPSAAGKQVDESGTKVDEYGAKDYRLQMPLKDDHTSRPLWVAPDGHIFLEAFSPVYKYAQDFLVAIAEPVCRPTHVHEYKLTAYSLYAAVSVGLQTSDITDYLRKLSKTGVPEGIIQFIKLCTVSYGKVKLVLKHNRYFVESSHPDVIQHLLQDPVIRECRLRNSEGEATELITETFTSKSAIAKSVEGSGGPSTSRVTDPQGKSDIPTDLFDFYEQMDKDEEEEEETQTVSFEVKQEMIEELQKRCIHLEYPLLAEYDFRNDSVNPDINIDLKPTAVLRPYQEKSLRKMFGNGRARSGVIVLPCGAGKSLVGVTAACTVRKRCLVLGNSAVSVEQWKAQFKMWSTIDDSQICRFTSDAKDKPIGCSIAISTYSMLGHTTKRSWEAERVMEWLKTQEWGLMILDEVHTIPAKMFRRVLTIVQAHCKLGLTATLVREDDKIVDLNFLIGPKLYEANWMELQNSGYIAKVQCAEVWCPMSPEFYREYVAIKTKKRILLYTMNPNKFRACQFLIKFHERRNDKIIVFADNVFALKEYAIRLNKPYIYGPTSQGERMQILQNFKHNPKINTIFISKVGDTSFDLPEANVLIQISSHGGSRRQEAQRLGRVLRAKKGMVAEEYNAFFYSLVSQDTQEMAYSTKRQRFLVDQGYSFKVITKLAGMEEEDLAFSTKEEQQQLLQKVLAATDLDAEEEVVAGEFGSKSSQVSRRFGTMSSMSGADDTVYMEYHSSRSKTSTKHVHPLFKRFRK</sequence>
<protein>
    <recommendedName>
        <fullName>General transcription and DNA repair factor IIH helicase/translocase subunit XPB</fullName>
        <shortName>TFIIH subunit XPB</shortName>
        <ecNumber evidence="7">5.6.2.4</ecNumber>
    </recommendedName>
    <alternativeName>
        <fullName evidence="7">DNA 3'-5' helicase/translocase XPB</fullName>
    </alternativeName>
    <alternativeName>
        <fullName>DNA excision repair protein ERCC-3</fullName>
    </alternativeName>
</protein>
<evidence type="ECO:0000250" key="1"/>
<evidence type="ECO:0000250" key="2">
    <source>
        <dbReference type="UniProtKB" id="P19447"/>
    </source>
</evidence>
<evidence type="ECO:0000255" key="3"/>
<evidence type="ECO:0000255" key="4">
    <source>
        <dbReference type="PROSITE-ProRule" id="PRU00541"/>
    </source>
</evidence>
<evidence type="ECO:0000255" key="5">
    <source>
        <dbReference type="PROSITE-ProRule" id="PRU00542"/>
    </source>
</evidence>
<evidence type="ECO:0000256" key="6">
    <source>
        <dbReference type="SAM" id="MobiDB-lite"/>
    </source>
</evidence>
<evidence type="ECO:0000305" key="7"/>
<keyword id="KW-0067">ATP-binding</keyword>
<keyword id="KW-0227">DNA damage</keyword>
<keyword id="KW-0234">DNA repair</keyword>
<keyword id="KW-0238">DNA-binding</keyword>
<keyword id="KW-0347">Helicase</keyword>
<keyword id="KW-0378">Hydrolase</keyword>
<keyword id="KW-0413">Isomerase</keyword>
<keyword id="KW-0547">Nucleotide-binding</keyword>
<keyword id="KW-0539">Nucleus</keyword>
<keyword id="KW-0597">Phosphoprotein</keyword>
<keyword id="KW-1185">Reference proteome</keyword>
<keyword id="KW-0804">Transcription</keyword>
<keyword id="KW-0805">Transcription regulation</keyword>
<name>ERCC3_BOVIN</name>
<comment type="function">
    <text evidence="2">ATP-dependent 3'-5' DNA helicase/translocase; binds dsDNA rather than ssDNA, unzipping it in a translocase rather than classical helicase activity. Component of the general transcription and DNA repair factor IIH (TFIIH) core complex. When complexed to CDK-activating kinase (CAK), involved in RNA transcription by RNA polymerase II. The ATPase activity of XPB/ERCC3, but not its helicase activity, is required for DNA opening; it may wrap around the damaged DNA wedging it open, causing localized melting and twisting that allows XPD/ERCC2 helicase to anchor. The ATP-dependent helicase activity of XPB/ERCC3 may be required for promoter escape. Also involved in transcription-coupled nucleotide excision repair (NER) of damaged DNA. In NER, TFIIH acts by opening DNA around the lesion to allow the excision of the damaged oligonucleotide and its replacement by a new DNA fragment. The structure of the TFIIH transcription complex differs from the NER-TFIIH complex; large movements by XPD/ERCC2 and XPB/ERCC3 are stabilized by XPA.</text>
</comment>
<comment type="catalytic activity">
    <reaction evidence="2">
        <text>Couples ATP hydrolysis with the unwinding of duplex DNA by translocating in the 3'-5' direction.</text>
        <dbReference type="EC" id="5.6.2.4"/>
    </reaction>
</comment>
<comment type="catalytic activity">
    <reaction evidence="2">
        <text>ATP + H2O = ADP + phosphate + H(+)</text>
        <dbReference type="Rhea" id="RHEA:13065"/>
        <dbReference type="ChEBI" id="CHEBI:15377"/>
        <dbReference type="ChEBI" id="CHEBI:15378"/>
        <dbReference type="ChEBI" id="CHEBI:30616"/>
        <dbReference type="ChEBI" id="CHEBI:43474"/>
        <dbReference type="ChEBI" id="CHEBI:456216"/>
        <dbReference type="EC" id="5.6.2.4"/>
    </reaction>
</comment>
<comment type="activity regulation">
    <text evidence="2">Phosphorylation on Ser-751 by CK2 controls the 5'-excision activity of ERCC1-XPF endonuclease; phosphorylated protein inhibits the excision activity and thus NER. ATPase activity is stimulated by TFIIH subunit p52 (GTF2H4). DNA translocase activity by this subunit in TFIIH is stimulated by XPA, ERCC5/XPG and XFP plus ERCC1.</text>
</comment>
<comment type="subunit">
    <text evidence="2">Component of the 7-subunit TFIIH core complex composed of XPB/ERCC3, XPD/ERCC2, GTF2H1, GTF2H2, GTF2H3, GTF2H4 and GTF2H5, which is active in NER. The core complex associates with the 3-subunit CDK-activating kinase (CAK) module composed of CCNH/cyclin H, CDK7 and MNAT1 to form the 10-subunit holoenzyme (holo-TFIIH) active in transcription. Interacts with PUF60. Interacts with ATF7IP. Interacts with KAT2A; leading to KAT2A recruitment to promoters and acetylation of histones. Part of TBP-based Pol II pre-initiation complex (PIC), in which Pol II core assembles with general transcription factors and other specific initiation factors including GTF2E1, GTF2E2, GTF2F1, GTF2F2, TCEA1, ERCC2, ERCC3, GTF2H2, GTF2H3, GTF2H4, GTF2H5, GTF2A1, GTF2A2, GTF2B and TBP; this large multi-subunit PIC complex mediates DNA unwinding and targets Pol II core to the transcription start site where the first phosphodiester bond forms.</text>
</comment>
<comment type="subcellular location">
    <subcellularLocation>
        <location evidence="1">Nucleus</location>
    </subcellularLocation>
</comment>
<comment type="PTM">
    <text evidence="2">Phosphorylation on Ser-751 by CK2 controls the 5'-excision activity of ERCC1-XPF endonuclease; phosphorylated protein inhibits the excision activity and thus NER. Dephosphorylation reactivates the 5'-excision step. Phosphorylation has no effect on transcription or the 3'-5' helicase activity.</text>
</comment>
<comment type="similarity">
    <text evidence="7">Belongs to the helicase family. RAD25/XPB subfamily.</text>
</comment>
<dbReference type="EC" id="5.6.2.4" evidence="7"/>
<dbReference type="EMBL" id="BC114729">
    <property type="protein sequence ID" value="AAI14730.1"/>
    <property type="molecule type" value="mRNA"/>
</dbReference>
<dbReference type="RefSeq" id="NP_001039453.1">
    <property type="nucleotide sequence ID" value="NM_001045988.1"/>
</dbReference>
<dbReference type="SMR" id="Q1RMT1"/>
<dbReference type="FunCoup" id="Q1RMT1">
    <property type="interactions" value="5285"/>
</dbReference>
<dbReference type="STRING" id="9913.ENSBTAP00000027687"/>
<dbReference type="PaxDb" id="9913-ENSBTAP00000027687"/>
<dbReference type="Ensembl" id="ENSBTAT00000027687.5">
    <property type="protein sequence ID" value="ENSBTAP00000027687.4"/>
    <property type="gene ID" value="ENSBTAG00000020777.6"/>
</dbReference>
<dbReference type="GeneID" id="507984"/>
<dbReference type="KEGG" id="bta:507984"/>
<dbReference type="CTD" id="2071"/>
<dbReference type="VEuPathDB" id="HostDB:ENSBTAG00000020777"/>
<dbReference type="VGNC" id="VGNC:28570">
    <property type="gene designation" value="ERCC3"/>
</dbReference>
<dbReference type="eggNOG" id="KOG1123">
    <property type="taxonomic scope" value="Eukaryota"/>
</dbReference>
<dbReference type="GeneTree" id="ENSGT00390000002204"/>
<dbReference type="HOGENOM" id="CLU_008213_0_0_1"/>
<dbReference type="InParanoid" id="Q1RMT1"/>
<dbReference type="OMA" id="RCQEIDY"/>
<dbReference type="OrthoDB" id="10262986at2759"/>
<dbReference type="TreeFam" id="TF101233"/>
<dbReference type="Reactome" id="R-BTA-113418">
    <property type="pathway name" value="Formation of the Early Elongation Complex"/>
</dbReference>
<dbReference type="Reactome" id="R-BTA-5696395">
    <property type="pathway name" value="Formation of Incision Complex in GG-NER"/>
</dbReference>
<dbReference type="Reactome" id="R-BTA-5696400">
    <property type="pathway name" value="Dual Incision in GG-NER"/>
</dbReference>
<dbReference type="Reactome" id="R-BTA-674695">
    <property type="pathway name" value="RNA Polymerase II Pre-transcription Events"/>
</dbReference>
<dbReference type="Reactome" id="R-BTA-6781823">
    <property type="pathway name" value="Formation of TC-NER Pre-Incision Complex"/>
</dbReference>
<dbReference type="Reactome" id="R-BTA-6782135">
    <property type="pathway name" value="Dual incision in TC-NER"/>
</dbReference>
<dbReference type="Reactome" id="R-BTA-6782210">
    <property type="pathway name" value="Gap-filling DNA repair synthesis and ligation in TC-NER"/>
</dbReference>
<dbReference type="Reactome" id="R-BTA-6796648">
    <property type="pathway name" value="TP53 Regulates Transcription of DNA Repair Genes"/>
</dbReference>
<dbReference type="Reactome" id="R-BTA-72086">
    <property type="pathway name" value="mRNA Capping"/>
</dbReference>
<dbReference type="Reactome" id="R-BTA-73762">
    <property type="pathway name" value="RNA Polymerase I Transcription Initiation"/>
</dbReference>
<dbReference type="Reactome" id="R-BTA-73772">
    <property type="pathway name" value="RNA Polymerase I Promoter Escape"/>
</dbReference>
<dbReference type="Reactome" id="R-BTA-73776">
    <property type="pathway name" value="RNA Polymerase II Promoter Escape"/>
</dbReference>
<dbReference type="Reactome" id="R-BTA-73779">
    <property type="pathway name" value="RNA Polymerase II Transcription Pre-Initiation And Promoter Opening"/>
</dbReference>
<dbReference type="Reactome" id="R-BTA-73863">
    <property type="pathway name" value="RNA Polymerase I Transcription Termination"/>
</dbReference>
<dbReference type="Reactome" id="R-BTA-75953">
    <property type="pathway name" value="RNA Polymerase II Transcription Initiation"/>
</dbReference>
<dbReference type="Reactome" id="R-BTA-75955">
    <property type="pathway name" value="RNA Polymerase II Transcription Elongation"/>
</dbReference>
<dbReference type="Reactome" id="R-BTA-76042">
    <property type="pathway name" value="RNA Polymerase II Transcription Initiation And Promoter Clearance"/>
</dbReference>
<dbReference type="Reactome" id="R-BTA-77075">
    <property type="pathway name" value="RNA Pol II CTD phosphorylation and interaction with CE"/>
</dbReference>
<dbReference type="Proteomes" id="UP000009136">
    <property type="component" value="Chromosome 2"/>
</dbReference>
<dbReference type="Bgee" id="ENSBTAG00000020777">
    <property type="expression patterns" value="Expressed in oocyte and 105 other cell types or tissues"/>
</dbReference>
<dbReference type="GO" id="GO:0000112">
    <property type="term" value="C:nucleotide-excision repair factor 3 complex"/>
    <property type="evidence" value="ECO:0000318"/>
    <property type="project" value="GO_Central"/>
</dbReference>
<dbReference type="GO" id="GO:0005669">
    <property type="term" value="C:transcription factor TFIID complex"/>
    <property type="evidence" value="ECO:0007669"/>
    <property type="project" value="Ensembl"/>
</dbReference>
<dbReference type="GO" id="GO:0000439">
    <property type="term" value="C:transcription factor TFIIH core complex"/>
    <property type="evidence" value="ECO:0000250"/>
    <property type="project" value="UniProtKB"/>
</dbReference>
<dbReference type="GO" id="GO:0005675">
    <property type="term" value="C:transcription factor TFIIH holo complex"/>
    <property type="evidence" value="ECO:0000318"/>
    <property type="project" value="GO_Central"/>
</dbReference>
<dbReference type="GO" id="GO:0097550">
    <property type="term" value="C:transcription preinitiation complex"/>
    <property type="evidence" value="ECO:0000318"/>
    <property type="project" value="GO_Central"/>
</dbReference>
<dbReference type="GO" id="GO:0043138">
    <property type="term" value="F:3'-5' DNA helicase activity"/>
    <property type="evidence" value="ECO:0000250"/>
    <property type="project" value="UniProtKB"/>
</dbReference>
<dbReference type="GO" id="GO:0005524">
    <property type="term" value="F:ATP binding"/>
    <property type="evidence" value="ECO:0007669"/>
    <property type="project" value="UniProtKB-KW"/>
</dbReference>
<dbReference type="GO" id="GO:0016887">
    <property type="term" value="F:ATP hydrolysis activity"/>
    <property type="evidence" value="ECO:0000250"/>
    <property type="project" value="UniProtKB"/>
</dbReference>
<dbReference type="GO" id="GO:0003677">
    <property type="term" value="F:DNA binding"/>
    <property type="evidence" value="ECO:0007669"/>
    <property type="project" value="UniProtKB-KW"/>
</dbReference>
<dbReference type="GO" id="GO:1990841">
    <property type="term" value="F:promoter-specific chromatin binding"/>
    <property type="evidence" value="ECO:0007669"/>
    <property type="project" value="Ensembl"/>
</dbReference>
<dbReference type="GO" id="GO:0006915">
    <property type="term" value="P:apoptotic process"/>
    <property type="evidence" value="ECO:0000250"/>
    <property type="project" value="UniProtKB"/>
</dbReference>
<dbReference type="GO" id="GO:0006281">
    <property type="term" value="P:DNA repair"/>
    <property type="evidence" value="ECO:0000250"/>
    <property type="project" value="UniProtKB"/>
</dbReference>
<dbReference type="GO" id="GO:0006265">
    <property type="term" value="P:DNA topological change"/>
    <property type="evidence" value="ECO:0000250"/>
    <property type="project" value="UniProtKB"/>
</dbReference>
<dbReference type="GO" id="GO:0048568">
    <property type="term" value="P:embryonic organ development"/>
    <property type="evidence" value="ECO:0000318"/>
    <property type="project" value="GO_Central"/>
</dbReference>
<dbReference type="GO" id="GO:0035315">
    <property type="term" value="P:hair cell differentiation"/>
    <property type="evidence" value="ECO:0000250"/>
    <property type="project" value="UniProtKB"/>
</dbReference>
<dbReference type="GO" id="GO:0006289">
    <property type="term" value="P:nucleotide-excision repair"/>
    <property type="evidence" value="ECO:0000250"/>
    <property type="project" value="UniProtKB"/>
</dbReference>
<dbReference type="GO" id="GO:0043065">
    <property type="term" value="P:positive regulation of apoptotic process"/>
    <property type="evidence" value="ECO:0007669"/>
    <property type="project" value="Ensembl"/>
</dbReference>
<dbReference type="GO" id="GO:0008104">
    <property type="term" value="P:protein localization"/>
    <property type="evidence" value="ECO:0000250"/>
    <property type="project" value="UniProtKB"/>
</dbReference>
<dbReference type="GO" id="GO:1901990">
    <property type="term" value="P:regulation of mitotic cell cycle phase transition"/>
    <property type="evidence" value="ECO:0000250"/>
    <property type="project" value="UniProtKB"/>
</dbReference>
<dbReference type="GO" id="GO:0006979">
    <property type="term" value="P:response to oxidative stress"/>
    <property type="evidence" value="ECO:0000250"/>
    <property type="project" value="UniProtKB"/>
</dbReference>
<dbReference type="GO" id="GO:0009411">
    <property type="term" value="P:response to UV"/>
    <property type="evidence" value="ECO:0000250"/>
    <property type="project" value="UniProtKB"/>
</dbReference>
<dbReference type="GO" id="GO:0006366">
    <property type="term" value="P:transcription by RNA polymerase II"/>
    <property type="evidence" value="ECO:0000250"/>
    <property type="project" value="UniProtKB"/>
</dbReference>
<dbReference type="GO" id="GO:0006367">
    <property type="term" value="P:transcription initiation at RNA polymerase II promoter"/>
    <property type="evidence" value="ECO:0000318"/>
    <property type="project" value="GO_Central"/>
</dbReference>
<dbReference type="GO" id="GO:0006283">
    <property type="term" value="P:transcription-coupled nucleotide-excision repair"/>
    <property type="evidence" value="ECO:0000250"/>
    <property type="project" value="UniProtKB"/>
</dbReference>
<dbReference type="GO" id="GO:0009650">
    <property type="term" value="P:UV protection"/>
    <property type="evidence" value="ECO:0007669"/>
    <property type="project" value="Ensembl"/>
</dbReference>
<dbReference type="CDD" id="cd18029">
    <property type="entry name" value="DEXHc_XPB"/>
    <property type="match status" value="1"/>
</dbReference>
<dbReference type="CDD" id="cd18789">
    <property type="entry name" value="SF2_C_XPB"/>
    <property type="match status" value="1"/>
</dbReference>
<dbReference type="FunFam" id="3.40.50.300:FF:000077">
    <property type="entry name" value="Probable DNA repair helicase RAD25"/>
    <property type="match status" value="1"/>
</dbReference>
<dbReference type="FunFam" id="3.40.50.300:FF:000117">
    <property type="entry name" value="Putative DNA repair helicase rad25"/>
    <property type="match status" value="1"/>
</dbReference>
<dbReference type="Gene3D" id="3.40.50.300">
    <property type="entry name" value="P-loop containing nucleotide triphosphate hydrolases"/>
    <property type="match status" value="2"/>
</dbReference>
<dbReference type="InterPro" id="IPR050615">
    <property type="entry name" value="ATP-dep_DNA_Helicase"/>
</dbReference>
<dbReference type="InterPro" id="IPR032438">
    <property type="entry name" value="ERCC3_RAD25_C"/>
</dbReference>
<dbReference type="InterPro" id="IPR006935">
    <property type="entry name" value="Helicase/UvrB_N"/>
</dbReference>
<dbReference type="InterPro" id="IPR014001">
    <property type="entry name" value="Helicase_ATP-bd"/>
</dbReference>
<dbReference type="InterPro" id="IPR001650">
    <property type="entry name" value="Helicase_C-like"/>
</dbReference>
<dbReference type="InterPro" id="IPR027417">
    <property type="entry name" value="P-loop_NTPase"/>
</dbReference>
<dbReference type="InterPro" id="IPR001161">
    <property type="entry name" value="XPB/Ssl2"/>
</dbReference>
<dbReference type="InterPro" id="IPR032830">
    <property type="entry name" value="XPB/Ssl2_N"/>
</dbReference>
<dbReference type="NCBIfam" id="TIGR00603">
    <property type="entry name" value="rad25"/>
    <property type="match status" value="1"/>
</dbReference>
<dbReference type="PANTHER" id="PTHR11274:SF0">
    <property type="entry name" value="GENERAL TRANSCRIPTION AND DNA REPAIR FACTOR IIH HELICASE SUBUNIT XPB"/>
    <property type="match status" value="1"/>
</dbReference>
<dbReference type="PANTHER" id="PTHR11274">
    <property type="entry name" value="RAD25/XP-B DNA REPAIR HELICASE"/>
    <property type="match status" value="1"/>
</dbReference>
<dbReference type="Pfam" id="PF16203">
    <property type="entry name" value="ERCC3_RAD25_C"/>
    <property type="match status" value="1"/>
</dbReference>
<dbReference type="Pfam" id="PF13625">
    <property type="entry name" value="Helicase_C_3"/>
    <property type="match status" value="1"/>
</dbReference>
<dbReference type="Pfam" id="PF04851">
    <property type="entry name" value="ResIII"/>
    <property type="match status" value="1"/>
</dbReference>
<dbReference type="PRINTS" id="PR00851">
    <property type="entry name" value="XRODRMPGMNTB"/>
</dbReference>
<dbReference type="SMART" id="SM00487">
    <property type="entry name" value="DEXDc"/>
    <property type="match status" value="1"/>
</dbReference>
<dbReference type="SMART" id="SM00490">
    <property type="entry name" value="HELICc"/>
    <property type="match status" value="1"/>
</dbReference>
<dbReference type="SUPFAM" id="SSF52540">
    <property type="entry name" value="P-loop containing nucleoside triphosphate hydrolases"/>
    <property type="match status" value="2"/>
</dbReference>
<dbReference type="PROSITE" id="PS51192">
    <property type="entry name" value="HELICASE_ATP_BIND_1"/>
    <property type="match status" value="1"/>
</dbReference>
<dbReference type="PROSITE" id="PS51194">
    <property type="entry name" value="HELICASE_CTER"/>
    <property type="match status" value="1"/>
</dbReference>
<accession>Q1RMT1</accession>
<gene>
    <name type="primary">ERCC3</name>
</gene>
<feature type="chain" id="PRO_0000323741" description="General transcription and DNA repair factor IIH helicase/translocase subunit XPB">
    <location>
        <begin position="1"/>
        <end position="782"/>
    </location>
</feature>
<feature type="domain" description="Helicase ATP-binding" evidence="4">
    <location>
        <begin position="327"/>
        <end position="488"/>
    </location>
</feature>
<feature type="domain" description="Helicase C-terminal" evidence="5">
    <location>
        <begin position="542"/>
        <end position="702"/>
    </location>
</feature>
<feature type="region of interest" description="Disordered" evidence="6">
    <location>
        <begin position="1"/>
        <end position="51"/>
    </location>
</feature>
<feature type="short sequence motif" description="Nuclear localization signal" evidence="3">
    <location>
        <begin position="6"/>
        <end position="18"/>
    </location>
</feature>
<feature type="short sequence motif" description="DEVH box">
    <location>
        <begin position="441"/>
        <end position="444"/>
    </location>
</feature>
<feature type="compositionally biased region" description="Basic and acidic residues" evidence="6">
    <location>
        <begin position="1"/>
        <end position="11"/>
    </location>
</feature>
<feature type="compositionally biased region" description="Acidic residues" evidence="6">
    <location>
        <begin position="21"/>
        <end position="30"/>
    </location>
</feature>
<feature type="binding site" evidence="4">
    <location>
        <begin position="340"/>
        <end position="347"/>
    </location>
    <ligand>
        <name>ATP</name>
        <dbReference type="ChEBI" id="CHEBI:30616"/>
    </ligand>
</feature>
<feature type="modified residue" description="Phosphoserine" evidence="2">
    <location>
        <position position="686"/>
    </location>
</feature>
<feature type="modified residue" description="Phosphoserine; by CK2" evidence="2">
    <location>
        <position position="751"/>
    </location>
</feature>
<organism>
    <name type="scientific">Bos taurus</name>
    <name type="common">Bovine</name>
    <dbReference type="NCBI Taxonomy" id="9913"/>
    <lineage>
        <taxon>Eukaryota</taxon>
        <taxon>Metazoa</taxon>
        <taxon>Chordata</taxon>
        <taxon>Craniata</taxon>
        <taxon>Vertebrata</taxon>
        <taxon>Euteleostomi</taxon>
        <taxon>Mammalia</taxon>
        <taxon>Eutheria</taxon>
        <taxon>Laurasiatheria</taxon>
        <taxon>Artiodactyla</taxon>
        <taxon>Ruminantia</taxon>
        <taxon>Pecora</taxon>
        <taxon>Bovidae</taxon>
        <taxon>Bovinae</taxon>
        <taxon>Bos</taxon>
    </lineage>
</organism>
<proteinExistence type="evidence at transcript level"/>